<reference key="1">
    <citation type="submission" date="2004-11" db="EMBL/GenBank/DDBJ databases">
        <authorList>
            <consortium name="NIH - Zebrafish Gene Collection (ZGC) project"/>
        </authorList>
    </citation>
    <scope>NUCLEOTIDE SEQUENCE [LARGE SCALE MRNA]</scope>
    <source>
        <tissue>Larva</tissue>
    </source>
</reference>
<keyword id="KW-0158">Chromosome</keyword>
<keyword id="KW-0539">Nucleus</keyword>
<keyword id="KW-1185">Reference proteome</keyword>
<feature type="chain" id="PRO_0000312126" description="Cytokine-like nuclear factor N-PAC">
    <location>
        <begin position="1"/>
        <end position="462"/>
    </location>
</feature>
<feature type="domain" description="PWWP" evidence="2">
    <location>
        <begin position="8"/>
        <end position="66"/>
    </location>
</feature>
<feature type="region of interest" description="Disordered" evidence="3">
    <location>
        <begin position="91"/>
        <end position="139"/>
    </location>
</feature>
<feature type="region of interest" description="Dehydrogenase domain" evidence="1">
    <location>
        <begin position="169"/>
        <end position="462"/>
    </location>
</feature>
<feature type="compositionally biased region" description="Basic and acidic residues" evidence="3">
    <location>
        <begin position="91"/>
        <end position="111"/>
    </location>
</feature>
<feature type="binding site" evidence="1">
    <location>
        <begin position="179"/>
        <end position="193"/>
    </location>
    <ligand>
        <name>NAD(+)</name>
        <dbReference type="ChEBI" id="CHEBI:57540"/>
    </ligand>
</feature>
<feature type="binding site" evidence="1">
    <location>
        <position position="270"/>
    </location>
    <ligand>
        <name>NAD(+)</name>
        <dbReference type="ChEBI" id="CHEBI:57540"/>
    </ligand>
</feature>
<feature type="binding site" evidence="1">
    <location>
        <position position="414"/>
    </location>
    <ligand>
        <name>NAD(+)</name>
        <dbReference type="ChEBI" id="CHEBI:57540"/>
    </ligand>
</feature>
<organism>
    <name type="scientific">Danio rerio</name>
    <name type="common">Zebrafish</name>
    <name type="synonym">Brachydanio rerio</name>
    <dbReference type="NCBI Taxonomy" id="7955"/>
    <lineage>
        <taxon>Eukaryota</taxon>
        <taxon>Metazoa</taxon>
        <taxon>Chordata</taxon>
        <taxon>Craniata</taxon>
        <taxon>Vertebrata</taxon>
        <taxon>Euteleostomi</taxon>
        <taxon>Actinopterygii</taxon>
        <taxon>Neopterygii</taxon>
        <taxon>Teleostei</taxon>
        <taxon>Ostariophysi</taxon>
        <taxon>Cypriniformes</taxon>
        <taxon>Danionidae</taxon>
        <taxon>Danioninae</taxon>
        <taxon>Danio</taxon>
    </lineage>
</organism>
<comment type="function">
    <text evidence="1">May have oxidoreductase activity. Regulates p38 MAP kinase activity by mediating stress activation of mapk14 and specifically regulating mapk14 signaling.</text>
</comment>
<comment type="function">
    <text evidence="1">Cytokine-like nuclear factor with chromatin gene reader activity involved in chromatin modification and regulation of gene expression. Acts as a nucleosome-destabilizing factor that is recruited to genes during transcriptional activation. Recognizes and binds histone H3 without a preference for specific epigenetic markers and also binds DNA. Interacts with KDM1B and promotes its histone demethylase activity by facilitating the capture of H3 tails, they form a multifunctional enzyme complex that modifies transcribed chromatin and facilitates Pol II transcription through nucleosomes.</text>
</comment>
<comment type="subunit">
    <text evidence="1">Homotetramere. Binds to mononucleosomes.</text>
</comment>
<comment type="subcellular location">
    <subcellularLocation>
        <location evidence="1">Nucleus</location>
    </subcellularLocation>
    <subcellularLocation>
        <location evidence="1">Chromosome</location>
    </subcellularLocation>
    <text evidence="1">Found in actively RNAPolII-transcribed gene bodies.</text>
</comment>
<comment type="domain">
    <text evidence="1">The A.T hook DNA-binding domain is required for the interaction with MAPK14.</text>
</comment>
<comment type="domain">
    <text evidence="1">The PWWP domain is a H3 reader and strongly binds DNA.</text>
</comment>
<comment type="domain">
    <text evidence="1">In the dehydrogenase domain, the conserved NAD(P)H-binding sites and sequence similarity to plant dehydrogenases suggest that this protein may have oxidoreductase activity. However, since the active site is not conserved, the dehydrogenase domain seems to serve as a catalytically inert oligomerization module.</text>
</comment>
<comment type="similarity">
    <text evidence="4">Belongs to the HIBADH-related family. NP60 subfamily.</text>
</comment>
<gene>
    <name type="primary">glyr1</name>
    <name type="synonym">np60</name>
    <name type="ORF">zgc:103629</name>
</gene>
<accession>Q5RKN4</accession>
<dbReference type="EMBL" id="BC085567">
    <property type="protein sequence ID" value="AAH85567.1"/>
    <property type="molecule type" value="mRNA"/>
</dbReference>
<dbReference type="RefSeq" id="NP_001007772.1">
    <property type="nucleotide sequence ID" value="NM_001007771.1"/>
</dbReference>
<dbReference type="SMR" id="Q5RKN4"/>
<dbReference type="FunCoup" id="Q5RKN4">
    <property type="interactions" value="2052"/>
</dbReference>
<dbReference type="STRING" id="7955.ENSDARP00000137468"/>
<dbReference type="PaxDb" id="7955-ENSDARP00000055237"/>
<dbReference type="GeneID" id="493611"/>
<dbReference type="KEGG" id="dre:493611"/>
<dbReference type="AGR" id="ZFIN:ZDB-GENE-041121-5"/>
<dbReference type="CTD" id="84656"/>
<dbReference type="ZFIN" id="ZDB-GENE-041121-5">
    <property type="gene designation" value="glyr1"/>
</dbReference>
<dbReference type="eggNOG" id="KOG0409">
    <property type="taxonomic scope" value="Eukaryota"/>
</dbReference>
<dbReference type="eggNOG" id="KOG1904">
    <property type="taxonomic scope" value="Eukaryota"/>
</dbReference>
<dbReference type="InParanoid" id="Q5RKN4"/>
<dbReference type="OrthoDB" id="21615at2759"/>
<dbReference type="PhylomeDB" id="Q5RKN4"/>
<dbReference type="PRO" id="PR:Q5RKN4"/>
<dbReference type="Proteomes" id="UP000000437">
    <property type="component" value="Chromosome 3"/>
</dbReference>
<dbReference type="GO" id="GO:0000785">
    <property type="term" value="C:chromatin"/>
    <property type="evidence" value="ECO:0000318"/>
    <property type="project" value="GO_Central"/>
</dbReference>
<dbReference type="GO" id="GO:0005634">
    <property type="term" value="C:nucleus"/>
    <property type="evidence" value="ECO:0007669"/>
    <property type="project" value="UniProtKB-SubCell"/>
</dbReference>
<dbReference type="GO" id="GO:0003677">
    <property type="term" value="F:DNA binding"/>
    <property type="evidence" value="ECO:0000318"/>
    <property type="project" value="GO_Central"/>
</dbReference>
<dbReference type="GO" id="GO:0051287">
    <property type="term" value="F:NAD binding"/>
    <property type="evidence" value="ECO:0007669"/>
    <property type="project" value="InterPro"/>
</dbReference>
<dbReference type="GO" id="GO:0050661">
    <property type="term" value="F:NADP binding"/>
    <property type="evidence" value="ECO:0007669"/>
    <property type="project" value="InterPro"/>
</dbReference>
<dbReference type="GO" id="GO:0031491">
    <property type="term" value="F:nucleosome binding"/>
    <property type="evidence" value="ECO:0000318"/>
    <property type="project" value="GO_Central"/>
</dbReference>
<dbReference type="GO" id="GO:0140673">
    <property type="term" value="P:transcription elongation-coupled chromatin remodeling"/>
    <property type="evidence" value="ECO:0000318"/>
    <property type="project" value="GO_Central"/>
</dbReference>
<dbReference type="CDD" id="cd05836">
    <property type="entry name" value="PWWP_GLYR1"/>
    <property type="match status" value="1"/>
</dbReference>
<dbReference type="FunFam" id="3.40.50.720:FF:000058">
    <property type="entry name" value="Putative oxidoreductase GLYR1 homolog"/>
    <property type="match status" value="1"/>
</dbReference>
<dbReference type="FunFam" id="1.10.1040.10:FF:000011">
    <property type="entry name" value="putative oxidoreductase GLYR1 isoform X1"/>
    <property type="match status" value="1"/>
</dbReference>
<dbReference type="FunFam" id="2.30.30.140:FF:000027">
    <property type="entry name" value="putative oxidoreductase GLYR1 isoform X1"/>
    <property type="match status" value="1"/>
</dbReference>
<dbReference type="Gene3D" id="2.30.30.140">
    <property type="match status" value="1"/>
</dbReference>
<dbReference type="Gene3D" id="1.10.1040.10">
    <property type="entry name" value="N-(1-d-carboxylethyl)-l-norvaline Dehydrogenase, domain 2"/>
    <property type="match status" value="1"/>
</dbReference>
<dbReference type="Gene3D" id="3.40.50.720">
    <property type="entry name" value="NAD(P)-binding Rossmann-like Domain"/>
    <property type="match status" value="1"/>
</dbReference>
<dbReference type="InterPro" id="IPR008927">
    <property type="entry name" value="6-PGluconate_DH-like_C_sf"/>
</dbReference>
<dbReference type="InterPro" id="IPR013328">
    <property type="entry name" value="6PGD_dom2"/>
</dbReference>
<dbReference type="InterPro" id="IPR006115">
    <property type="entry name" value="6PGDH_NADP-bd"/>
</dbReference>
<dbReference type="InterPro" id="IPR035501">
    <property type="entry name" value="GLYR1_PWWP"/>
</dbReference>
<dbReference type="InterPro" id="IPR029154">
    <property type="entry name" value="HIBADH-like_NADP-bd"/>
</dbReference>
<dbReference type="InterPro" id="IPR051265">
    <property type="entry name" value="HIBADH-related_NP60_sf"/>
</dbReference>
<dbReference type="InterPro" id="IPR036291">
    <property type="entry name" value="NAD(P)-bd_dom_sf"/>
</dbReference>
<dbReference type="InterPro" id="IPR000313">
    <property type="entry name" value="PWWP_dom"/>
</dbReference>
<dbReference type="PANTHER" id="PTHR43580:SF2">
    <property type="entry name" value="CYTOKINE-LIKE NUCLEAR FACTOR N-PAC"/>
    <property type="match status" value="1"/>
</dbReference>
<dbReference type="PANTHER" id="PTHR43580">
    <property type="entry name" value="OXIDOREDUCTASE GLYR1-RELATED"/>
    <property type="match status" value="1"/>
</dbReference>
<dbReference type="Pfam" id="PF14833">
    <property type="entry name" value="NAD_binding_11"/>
    <property type="match status" value="1"/>
</dbReference>
<dbReference type="Pfam" id="PF03446">
    <property type="entry name" value="NAD_binding_2"/>
    <property type="match status" value="1"/>
</dbReference>
<dbReference type="Pfam" id="PF00855">
    <property type="entry name" value="PWWP"/>
    <property type="match status" value="1"/>
</dbReference>
<dbReference type="SMART" id="SM00293">
    <property type="entry name" value="PWWP"/>
    <property type="match status" value="1"/>
</dbReference>
<dbReference type="SUPFAM" id="SSF48179">
    <property type="entry name" value="6-phosphogluconate dehydrogenase C-terminal domain-like"/>
    <property type="match status" value="1"/>
</dbReference>
<dbReference type="SUPFAM" id="SSF51735">
    <property type="entry name" value="NAD(P)-binding Rossmann-fold domains"/>
    <property type="match status" value="1"/>
</dbReference>
<dbReference type="SUPFAM" id="SSF63748">
    <property type="entry name" value="Tudor/PWWP/MBT"/>
    <property type="match status" value="1"/>
</dbReference>
<dbReference type="PROSITE" id="PS50812">
    <property type="entry name" value="PWWP"/>
    <property type="match status" value="1"/>
</dbReference>
<protein>
    <recommendedName>
        <fullName>Cytokine-like nuclear factor N-PAC</fullName>
        <shortName>NPAC</shortName>
    </recommendedName>
    <alternativeName>
        <fullName>Glyoxylate reductase 1 homolog</fullName>
    </alternativeName>
    <alternativeName>
        <fullName>Nuclear protein NP60</fullName>
    </alternativeName>
    <alternativeName>
        <fullName>Putative oxidoreductase GLYR1</fullName>
    </alternativeName>
</protein>
<name>GLYR1_DANRE</name>
<evidence type="ECO:0000250" key="1">
    <source>
        <dbReference type="UniProtKB" id="Q49A26"/>
    </source>
</evidence>
<evidence type="ECO:0000255" key="2">
    <source>
        <dbReference type="PROSITE-ProRule" id="PRU00162"/>
    </source>
</evidence>
<evidence type="ECO:0000256" key="3">
    <source>
        <dbReference type="SAM" id="MobiDB-lite"/>
    </source>
</evidence>
<evidence type="ECO:0000305" key="4"/>
<sequence length="462" mass="50601">MATVHLRIGDLVWGKLGRYPPWPGKVVSPPKDLKKPRGKKCFFVKFFGTEDHAWIKVEQLKPYHPHKEEMIKVNKGKRFQQAVDAVEEYLKKAKGKDQSHSDDKSKSDKGRKAAKPMKIIEEDDEDAFKGGSSDKPASSMEPITKRLKIIEEDTRSTSIQAADSTAINGSITPTDKRIGFLGLGLMGSGVVSNLLKMGHVVTVWNRTAEKCDLFIQEGARLGRTPAEVVSMCDITFSCVSDPKAARDLVLGPSGVLQGIRPGKCYVEMSTVDPETITELSQVITSRGGRFLEAPVSGSQQLSNDGMLVIVAAGDRSVYEDCSSCFQAMGKTSFFIAGEAGNAARMMLILNMVQGSFMATIAEGLTLAQATGQSQQTFLDILCQGQMASTFVDQKCQNILQGNFKPDYYLKHIQKDLRLAISMGDSVNHPTPMAAAANEVYKRAKALDQSDNDMSAVYRAYIH</sequence>
<proteinExistence type="evidence at transcript level"/>